<proteinExistence type="evidence at protein level"/>
<comment type="function">
    <text>The key enzymatic reactions in nitrogen fixation are catalyzed by the nitrogenase complex, which has 2 components: the iron protein (component 2) and a component 1 which is either a molybdenum-iron protein, a vanadium-iron, or an iron-iron protein.</text>
</comment>
<comment type="catalytic activity">
    <reaction>
        <text>N2 + 8 reduced [2Fe-2S]-[ferredoxin] + 16 ATP + 16 H2O = H2 + 8 oxidized [2Fe-2S]-[ferredoxin] + 2 NH4(+) + 16 ADP + 16 phosphate + 6 H(+)</text>
        <dbReference type="Rhea" id="RHEA:21448"/>
        <dbReference type="Rhea" id="RHEA-COMP:10000"/>
        <dbReference type="Rhea" id="RHEA-COMP:10001"/>
        <dbReference type="ChEBI" id="CHEBI:15377"/>
        <dbReference type="ChEBI" id="CHEBI:15378"/>
        <dbReference type="ChEBI" id="CHEBI:17997"/>
        <dbReference type="ChEBI" id="CHEBI:18276"/>
        <dbReference type="ChEBI" id="CHEBI:28938"/>
        <dbReference type="ChEBI" id="CHEBI:30616"/>
        <dbReference type="ChEBI" id="CHEBI:33737"/>
        <dbReference type="ChEBI" id="CHEBI:33738"/>
        <dbReference type="ChEBI" id="CHEBI:43474"/>
        <dbReference type="ChEBI" id="CHEBI:456216"/>
        <dbReference type="EC" id="1.18.6.1"/>
    </reaction>
</comment>
<comment type="cofactor">
    <cofactor>
        <name>[4Fe-4S] cluster</name>
        <dbReference type="ChEBI" id="CHEBI:49883"/>
    </cofactor>
    <text>Binds 1 [4Fe-4S] cluster per dimer.</text>
</comment>
<comment type="activity regulation">
    <text evidence="4">Nitrogenase holoenzyme is subject to 'conformational protection' by FeSII; under oxidizing conditions FeSII binds to the holoenzyme and reversibly protects it from oxidation (PubMed:7830548).</text>
</comment>
<comment type="subunit">
    <text>Homodimer.</text>
</comment>
<comment type="induction">
    <text evidence="4">Constitutively expressed during log and stationary phase in sucrose-limited cultures, its levels decrease during stationary phase (at protein level).</text>
</comment>
<comment type="PTM">
    <text evidence="1">The reversible ADP-ribosylation of Arg-101 inactivates the nitrogenase reductase and regulates nitrogenase activity.</text>
</comment>
<comment type="miscellaneous">
    <text>This subunit is associated with the molybdenum-iron nitrogenase component 2.</text>
</comment>
<comment type="similarity">
    <text evidence="5">Belongs to the NifH/BchL/ChlL family.</text>
</comment>
<reference key="1">
    <citation type="journal article" date="1989" name="J. Bacteriol.">
        <title>Physical and genetic map of the major nif gene cluster from Azotobacter vinelandii.</title>
        <authorList>
            <person name="Jacobson M.R."/>
            <person name="Brigle K.E."/>
            <person name="Bennett L.T."/>
            <person name="Setterquist R.A."/>
            <person name="Wilson M.S."/>
            <person name="Cash V.L."/>
            <person name="Beynon J."/>
            <person name="Newton W.E."/>
            <person name="Dean D.R."/>
        </authorList>
    </citation>
    <scope>NUCLEOTIDE SEQUENCE [GENOMIC DNA]</scope>
    <source>
        <strain>ATCC 13705 / OP1 / DSM 366 / NCIMB 11614 / LMG 3878 / UW</strain>
    </source>
</reference>
<reference key="2">
    <citation type="journal article" date="1985" name="Gene">
        <title>Complete nucleotide sequence of the Azotobacter vinelandii nitrogenase structural gene cluster.</title>
        <authorList>
            <person name="Brigle K.E."/>
            <person name="Newton W.E."/>
            <person name="Dean D.R."/>
        </authorList>
    </citation>
    <scope>NUCLEOTIDE SEQUENCE [GENOMIC DNA]</scope>
    <source>
        <strain>ATCC 13705 / OP1 / DSM 366 / NCIMB 11614 / LMG 3878 / UW</strain>
    </source>
</reference>
<reference key="3">
    <citation type="journal article" date="1982" name="J. Biol. Chem.">
        <title>The amino acid sequence of the nitrogenase iron protein from Azotobacter vinelandii.</title>
        <authorList>
            <person name="Hausinger R.P."/>
            <person name="Howard J.B."/>
        </authorList>
    </citation>
    <scope>PROTEIN SEQUENCE OF 2-290</scope>
</reference>
<reference key="4">
    <citation type="journal article" date="1988" name="Nucleic Acids Res.">
        <title>Sequence of a 1.4 kb Eco RI fragment of Azotobacter vinelandii nif DNA.</title>
        <authorList>
            <person name="Hiratsuka K."/>
            <person name="Roy K.L."/>
        </authorList>
    </citation>
    <scope>NUCLEOTIDE SEQUENCE [GENOMIC DNA] OF 271-290</scope>
    <source>
        <strain>ATCC 13705 / OP1 / DSM 366 / NCIMB 11614 / LMG 3878 / UW</strain>
    </source>
</reference>
<reference key="5">
    <citation type="journal article" date="1992" name="J. Biol. Chem.">
        <title>Mapping the site(s) of MgATP and MgADP interaction with the nitrogenase of Azotobacter vinelandii. Lysine 15 of the iron protein plays a major role in MgATP interaction.</title>
        <authorList>
            <person name="Seefeldt L.C."/>
            <person name="Morgan T.V."/>
            <person name="Dean D.R."/>
            <person name="Mortenson L.E."/>
        </authorList>
    </citation>
    <scope>MUTAGENESIS OF LYS-16</scope>
    <source>
        <strain>ATCC 13705 / OP1 / DSM 366 / NCIMB 11614 / LMG 3878 / UW</strain>
    </source>
</reference>
<reference key="6">
    <citation type="journal article" date="1994" name="Mol. Microbiol.">
        <title>The FeSII protein of Azotobacter vinelandii is not essential for aerobic nitrogen fixation, but confers significant protection to oxygen-mediated inactivation of nitrogenase in vitro and in vivo.</title>
        <authorList>
            <person name="Moshiri F."/>
            <person name="Kim J.W."/>
            <person name="Fu C."/>
            <person name="Maier R.J."/>
        </authorList>
    </citation>
    <scope>ACTIVITY REGULATION</scope>
    <scope>INDUCTION</scope>
    <source>
        <strain>CA</strain>
    </source>
</reference>
<reference key="7">
    <citation type="journal article" date="1992" name="Science">
        <title>Crystallographic structure of the nitrogenase iron protein from Azotobacter vinelandii.</title>
        <authorList>
            <person name="Georgiadis M.M."/>
            <person name="Komiya H."/>
            <person name="Chakrabarti P."/>
            <person name="Woo D."/>
            <person name="Kornuc J.J."/>
            <person name="Rees D.C."/>
        </authorList>
    </citation>
    <scope>X-RAY CRYSTALLOGRAPHY (2.9 ANGSTROMS)</scope>
</reference>
<reference key="8">
    <citation type="journal article" date="1997" name="Nature">
        <title>Structure of ADP x [AlF(4)](-)-stabilized nitrogenase complex and its implications for signal transduction.</title>
        <authorList>
            <person name="Schindelin H."/>
            <person name="Kisker C."/>
            <person name="Schlessman J.L."/>
            <person name="Howard J.B."/>
            <person name="Rees D.C."/>
        </authorList>
    </citation>
    <scope>X-RAY CRYSTALLOGRAPHY (3.0 ANGSTROMS)</scope>
</reference>
<reference key="9">
    <citation type="journal article" date="1998" name="J. Mol. Biol.">
        <title>Conformational variability in structures of the nitrogenase iron proteins from Azotobacter vinelandii and Clostridium pasteurianum.</title>
        <authorList>
            <person name="Schlessman J.L."/>
            <person name="Woo D."/>
            <person name="Joshua-Tor L."/>
            <person name="Howard J.B."/>
            <person name="Rees D.C."/>
        </authorList>
    </citation>
    <scope>X-RAY CRYSTALLOGRAPHY (2.2 ANGSTROMS)</scope>
</reference>
<reference key="10">
    <citation type="journal article" date="2000" name="Biochemistry">
        <title>Insights into nucleotide signal transduction in nitrogenase: structure of an iron protein with MgADP bound.</title>
        <authorList>
            <person name="Jang S.B."/>
            <person name="Seefeldt L.C."/>
            <person name="Peters J.W."/>
        </authorList>
    </citation>
    <scope>X-RAY CRYSTALLOGRAPHY (2.15 ANGSTROMS)</scope>
</reference>
<reference key="11">
    <citation type="journal article" date="2001" name="Biochemistry">
        <title>Crystal structure of the all-ferrous [4Fe-4S]0 form of the nitrogenase iron protein from Azotobacter vinelandii.</title>
        <authorList>
            <person name="Strop P."/>
            <person name="Takahara P.M."/>
            <person name="Chiu H."/>
            <person name="Angove H.C."/>
            <person name="Burgess B.K."/>
            <person name="Rees D.C."/>
        </authorList>
    </citation>
    <scope>X-RAY CRYSTALLOGRAPHY (2.2 ANGSTROMS)</scope>
</reference>
<reference key="12">
    <citation type="journal article" date="2001" name="Biochemistry">
        <title>MgATP-bound and nucleotide-free structures of a nitrogenase protein complex between the Leu 127Delta-Fe-protein and the MoFe-protein.</title>
        <authorList>
            <person name="Chiu H.-J."/>
            <person name="Peters J.W."/>
            <person name="Lanzilotta W.N."/>
            <person name="Ryle M.J."/>
            <person name="Seefeldt L.C."/>
            <person name="Howard J.B."/>
            <person name="Rees D.C."/>
        </authorList>
    </citation>
    <scope>X-RAY CRYSTALLOGRAPHY (2.2 ANGSTROMS)</scope>
</reference>
<sequence>MAMRQCAIYGKGGIGKSTTTQNLVAALAEMGKKVMIVGCDPKADSTRLILHSKAQNTIMEMAAEAGTVEDLELEDVLKAGYGGVKCVESGGPEPGVGCAGRGVITAINFLEEEGAYEDDLDFVFYDVLGDVVCGGFAMPIRENKAQEIYIVCSGEMMAMYAANNISKGIVKYANSGSVRLGGLICNSRNTDREDELIIALANKLGTQMIHFVPRDNVVQRAEIRRMTVIEYDPKAKQADEYRALARKVVDNKLLVIPNPITMDELEELLMEFGIMEVEDESIVGKTAEEV</sequence>
<name>NIFH1_AZOVI</name>
<protein>
    <recommendedName>
        <fullName>Nitrogenase iron protein 1</fullName>
        <ecNumber>1.18.6.1</ecNumber>
    </recommendedName>
    <alternativeName>
        <fullName>Nitrogenase Fe protein 1</fullName>
    </alternativeName>
    <alternativeName>
        <fullName>Nitrogenase component II</fullName>
    </alternativeName>
    <alternativeName>
        <fullName>Nitrogenase reductase</fullName>
    </alternativeName>
</protein>
<dbReference type="EC" id="1.18.6.1"/>
<dbReference type="EMBL" id="M20568">
    <property type="protein sequence ID" value="AAA64709.1"/>
    <property type="molecule type" value="Genomic_DNA"/>
</dbReference>
<dbReference type="EMBL" id="M11579">
    <property type="protein sequence ID" value="AAA22142.1"/>
    <property type="molecule type" value="Genomic_DNA"/>
</dbReference>
<dbReference type="EMBL" id="X06886">
    <property type="protein sequence ID" value="CAA30003.1"/>
    <property type="molecule type" value="Genomic_DNA"/>
</dbReference>
<dbReference type="PIR" id="A94666">
    <property type="entry name" value="NIAVF"/>
</dbReference>
<dbReference type="PDB" id="1DE0">
    <property type="method" value="X-ray"/>
    <property type="resolution" value="2.40 A"/>
    <property type="chains" value="A/B=2-290"/>
</dbReference>
<dbReference type="PDB" id="1FP6">
    <property type="method" value="X-ray"/>
    <property type="resolution" value="2.15 A"/>
    <property type="chains" value="A/B/C/D=2-290"/>
</dbReference>
<dbReference type="PDB" id="1G1M">
    <property type="method" value="X-ray"/>
    <property type="resolution" value="2.25 A"/>
    <property type="chains" value="A/B=2-290"/>
</dbReference>
<dbReference type="PDB" id="1G20">
    <property type="method" value="X-ray"/>
    <property type="resolution" value="2.20 A"/>
    <property type="chains" value="E/F/G/H=1-290"/>
</dbReference>
<dbReference type="PDB" id="1G21">
    <property type="method" value="X-ray"/>
    <property type="resolution" value="3.00 A"/>
    <property type="chains" value="E/F/G/H=1-290"/>
</dbReference>
<dbReference type="PDB" id="1G5P">
    <property type="method" value="X-ray"/>
    <property type="resolution" value="2.20 A"/>
    <property type="chains" value="A/B=2-290"/>
</dbReference>
<dbReference type="PDB" id="1M1Y">
    <property type="method" value="X-ray"/>
    <property type="resolution" value="3.20 A"/>
    <property type="chains" value="E/F/G/H/M/N/O/P=2-290"/>
</dbReference>
<dbReference type="PDB" id="1M34">
    <property type="method" value="X-ray"/>
    <property type="resolution" value="2.30 A"/>
    <property type="chains" value="E/F/G/H/M/N/O/P=2-290"/>
</dbReference>
<dbReference type="PDB" id="1N2C">
    <property type="method" value="X-ray"/>
    <property type="resolution" value="3.00 A"/>
    <property type="chains" value="E/F/G/H=2-290"/>
</dbReference>
<dbReference type="PDB" id="1NIP">
    <property type="method" value="X-ray"/>
    <property type="resolution" value="2.90 A"/>
    <property type="chains" value="A/B=2-290"/>
</dbReference>
<dbReference type="PDB" id="1RW4">
    <property type="method" value="X-ray"/>
    <property type="resolution" value="2.50 A"/>
    <property type="chains" value="A=2-273"/>
</dbReference>
<dbReference type="PDB" id="1XCP">
    <property type="method" value="X-ray"/>
    <property type="resolution" value="3.20 A"/>
    <property type="chains" value="A/B/C/D=2-290"/>
</dbReference>
<dbReference type="PDB" id="1XD8">
    <property type="method" value="X-ray"/>
    <property type="resolution" value="2.70 A"/>
    <property type="chains" value="A/B=2-290"/>
</dbReference>
<dbReference type="PDB" id="1XD9">
    <property type="method" value="X-ray"/>
    <property type="resolution" value="2.80 A"/>
    <property type="chains" value="A/B=2-290"/>
</dbReference>
<dbReference type="PDB" id="1XDB">
    <property type="method" value="X-ray"/>
    <property type="resolution" value="2.80 A"/>
    <property type="chains" value="A/B=2-290"/>
</dbReference>
<dbReference type="PDB" id="2AFH">
    <property type="method" value="X-ray"/>
    <property type="resolution" value="2.10 A"/>
    <property type="chains" value="E/F=2-290"/>
</dbReference>
<dbReference type="PDB" id="2AFI">
    <property type="method" value="X-ray"/>
    <property type="resolution" value="3.10 A"/>
    <property type="chains" value="E/F/G/H/M/N/O/P=2-290"/>
</dbReference>
<dbReference type="PDB" id="2C8V">
    <property type="method" value="X-ray"/>
    <property type="resolution" value="2.50 A"/>
    <property type="chains" value="A=2-290"/>
</dbReference>
<dbReference type="PDB" id="2NIP">
    <property type="method" value="X-ray"/>
    <property type="resolution" value="2.20 A"/>
    <property type="chains" value="A/B=2-290"/>
</dbReference>
<dbReference type="PDB" id="4WZA">
    <property type="method" value="X-ray"/>
    <property type="resolution" value="1.90 A"/>
    <property type="chains" value="E/F/G/H=2-277"/>
</dbReference>
<dbReference type="PDB" id="4WZB">
    <property type="method" value="X-ray"/>
    <property type="resolution" value="2.30 A"/>
    <property type="chains" value="E/F/G/H=2-273"/>
</dbReference>
<dbReference type="PDB" id="6N4J">
    <property type="method" value="X-ray"/>
    <property type="resolution" value="1.95 A"/>
    <property type="chains" value="A/B=2-290"/>
</dbReference>
<dbReference type="PDB" id="6N4K">
    <property type="method" value="X-ray"/>
    <property type="resolution" value="1.76 A"/>
    <property type="chains" value="A/B=2-290"/>
</dbReference>
<dbReference type="PDB" id="6N4L">
    <property type="method" value="X-ray"/>
    <property type="resolution" value="1.13 A"/>
    <property type="chains" value="A=2-290"/>
</dbReference>
<dbReference type="PDB" id="6N4M">
    <property type="method" value="X-ray"/>
    <property type="resolution" value="1.58 A"/>
    <property type="chains" value="A=2-290"/>
</dbReference>
<dbReference type="PDB" id="7T4H">
    <property type="method" value="X-ray"/>
    <property type="resolution" value="1.51 A"/>
    <property type="chains" value="A=1-290"/>
</dbReference>
<dbReference type="PDB" id="7TNE">
    <property type="method" value="X-ray"/>
    <property type="resolution" value="1.39 A"/>
    <property type="chains" value="A=1-290"/>
</dbReference>
<dbReference type="PDB" id="7TPN">
    <property type="method" value="X-ray"/>
    <property type="resolution" value="1.38 A"/>
    <property type="chains" value="A=1-290"/>
</dbReference>
<dbReference type="PDB" id="7TPO">
    <property type="method" value="X-ray"/>
    <property type="resolution" value="1.35 A"/>
    <property type="chains" value="A=1-290"/>
</dbReference>
<dbReference type="PDB" id="7TPV">
    <property type="method" value="X-ray"/>
    <property type="resolution" value="1.49 A"/>
    <property type="chains" value="A=1-290"/>
</dbReference>
<dbReference type="PDB" id="7TPW">
    <property type="method" value="X-ray"/>
    <property type="resolution" value="1.18 A"/>
    <property type="chains" value="A=1-290"/>
</dbReference>
<dbReference type="PDB" id="7TPX">
    <property type="method" value="X-ray"/>
    <property type="resolution" value="1.35 A"/>
    <property type="chains" value="A=1-290"/>
</dbReference>
<dbReference type="PDB" id="7TPY">
    <property type="method" value="X-ray"/>
    <property type="resolution" value="1.48 A"/>
    <property type="chains" value="A=1-290"/>
</dbReference>
<dbReference type="PDB" id="7TPZ">
    <property type="method" value="X-ray"/>
    <property type="resolution" value="1.71 A"/>
    <property type="chains" value="A=1-290"/>
</dbReference>
<dbReference type="PDB" id="7TQ0">
    <property type="method" value="X-ray"/>
    <property type="resolution" value="1.81 A"/>
    <property type="chains" value="A=1-290"/>
</dbReference>
<dbReference type="PDB" id="7TQ9">
    <property type="method" value="X-ray"/>
    <property type="resolution" value="1.60 A"/>
    <property type="chains" value="A=1-290"/>
</dbReference>
<dbReference type="PDB" id="7TQC">
    <property type="method" value="X-ray"/>
    <property type="resolution" value="1.53 A"/>
    <property type="chains" value="A=1-290"/>
</dbReference>
<dbReference type="PDB" id="7TQE">
    <property type="method" value="X-ray"/>
    <property type="resolution" value="1.59 A"/>
    <property type="chains" value="A=1-290"/>
</dbReference>
<dbReference type="PDB" id="7TQF">
    <property type="method" value="X-ray"/>
    <property type="resolution" value="1.45 A"/>
    <property type="chains" value="A=1-290"/>
</dbReference>
<dbReference type="PDB" id="7TQH">
    <property type="method" value="X-ray"/>
    <property type="resolution" value="1.49 A"/>
    <property type="chains" value="A=1-290"/>
</dbReference>
<dbReference type="PDB" id="7TQI">
    <property type="method" value="X-ray"/>
    <property type="resolution" value="1.47 A"/>
    <property type="chains" value="A=1-290"/>
</dbReference>
<dbReference type="PDB" id="7TQJ">
    <property type="method" value="X-ray"/>
    <property type="resolution" value="1.48 A"/>
    <property type="chains" value="A=1-290"/>
</dbReference>
<dbReference type="PDB" id="7TQK">
    <property type="method" value="X-ray"/>
    <property type="resolution" value="1.48 A"/>
    <property type="chains" value="A=1-290"/>
</dbReference>
<dbReference type="PDB" id="7UT8">
    <property type="method" value="EM"/>
    <property type="resolution" value="2.43 A"/>
    <property type="chains" value="E/F=1-290"/>
</dbReference>
<dbReference type="PDB" id="7UT9">
    <property type="method" value="EM"/>
    <property type="resolution" value="2.44 A"/>
    <property type="chains" value="E/F=1-290"/>
</dbReference>
<dbReference type="PDB" id="7UTA">
    <property type="method" value="EM"/>
    <property type="resolution" value="2.40 A"/>
    <property type="chains" value="E/F/G/H=1-290"/>
</dbReference>
<dbReference type="PDB" id="8DFC">
    <property type="method" value="EM"/>
    <property type="resolution" value="2.48 A"/>
    <property type="chains" value="E/F=1-290"/>
</dbReference>
<dbReference type="PDB" id="8DFD">
    <property type="method" value="EM"/>
    <property type="resolution" value="2.12 A"/>
    <property type="chains" value="E/F/G/H=1-290"/>
</dbReference>
<dbReference type="PDB" id="8RHP">
    <property type="method" value="EM"/>
    <property type="resolution" value="2.89 A"/>
    <property type="chains" value="F/G/M/N=1-290"/>
</dbReference>
<dbReference type="PDB" id="8TC3">
    <property type="method" value="EM"/>
    <property type="resolution" value="2.57 A"/>
    <property type="chains" value="A/B=1-290"/>
</dbReference>
<dbReference type="PDB" id="9CU0">
    <property type="method" value="EM"/>
    <property type="resolution" value="3.94 A"/>
    <property type="chains" value="E/F=1-290"/>
</dbReference>
<dbReference type="PDB" id="9CU1">
    <property type="method" value="EM"/>
    <property type="resolution" value="2.83 A"/>
    <property type="chains" value="E/F/L/M=1-290"/>
</dbReference>
<dbReference type="PDB" id="9CU2">
    <property type="method" value="EM"/>
    <property type="resolution" value="2.27 A"/>
    <property type="chains" value="E/F/L/M=1-290"/>
</dbReference>
<dbReference type="PDBsum" id="1DE0"/>
<dbReference type="PDBsum" id="1FP6"/>
<dbReference type="PDBsum" id="1G1M"/>
<dbReference type="PDBsum" id="1G20"/>
<dbReference type="PDBsum" id="1G21"/>
<dbReference type="PDBsum" id="1G5P"/>
<dbReference type="PDBsum" id="1M1Y"/>
<dbReference type="PDBsum" id="1M34"/>
<dbReference type="PDBsum" id="1N2C"/>
<dbReference type="PDBsum" id="1NIP"/>
<dbReference type="PDBsum" id="1RW4"/>
<dbReference type="PDBsum" id="1XCP"/>
<dbReference type="PDBsum" id="1XD8"/>
<dbReference type="PDBsum" id="1XD9"/>
<dbReference type="PDBsum" id="1XDB"/>
<dbReference type="PDBsum" id="2AFH"/>
<dbReference type="PDBsum" id="2AFI"/>
<dbReference type="PDBsum" id="2C8V"/>
<dbReference type="PDBsum" id="2NIP"/>
<dbReference type="PDBsum" id="4WZA"/>
<dbReference type="PDBsum" id="4WZB"/>
<dbReference type="PDBsum" id="6N4J"/>
<dbReference type="PDBsum" id="6N4K"/>
<dbReference type="PDBsum" id="6N4L"/>
<dbReference type="PDBsum" id="6N4M"/>
<dbReference type="PDBsum" id="7T4H"/>
<dbReference type="PDBsum" id="7TNE"/>
<dbReference type="PDBsum" id="7TPN"/>
<dbReference type="PDBsum" id="7TPO"/>
<dbReference type="PDBsum" id="7TPV"/>
<dbReference type="PDBsum" id="7TPW"/>
<dbReference type="PDBsum" id="7TPX"/>
<dbReference type="PDBsum" id="7TPY"/>
<dbReference type="PDBsum" id="7TPZ"/>
<dbReference type="PDBsum" id="7TQ0"/>
<dbReference type="PDBsum" id="7TQ9"/>
<dbReference type="PDBsum" id="7TQC"/>
<dbReference type="PDBsum" id="7TQE"/>
<dbReference type="PDBsum" id="7TQF"/>
<dbReference type="PDBsum" id="7TQH"/>
<dbReference type="PDBsum" id="7TQI"/>
<dbReference type="PDBsum" id="7TQJ"/>
<dbReference type="PDBsum" id="7TQK"/>
<dbReference type="PDBsum" id="7UT8"/>
<dbReference type="PDBsum" id="7UT9"/>
<dbReference type="PDBsum" id="7UTA"/>
<dbReference type="PDBsum" id="8DFC"/>
<dbReference type="PDBsum" id="8DFD"/>
<dbReference type="PDBsum" id="8RHP"/>
<dbReference type="PDBsum" id="8TC3"/>
<dbReference type="PDBsum" id="9CU0"/>
<dbReference type="PDBsum" id="9CU1"/>
<dbReference type="PDBsum" id="9CU2"/>
<dbReference type="EMDB" id="EMD-19178"/>
<dbReference type="EMDB" id="EMD-27404"/>
<dbReference type="EMDB" id="EMD-27405"/>
<dbReference type="EMDB" id="EMD-45924"/>
<dbReference type="EMDB" id="EMD-45925"/>
<dbReference type="EMDB" id="EMD-45926"/>
<dbReference type="SMR" id="P00459"/>
<dbReference type="OMA" id="YGDVKCV"/>
<dbReference type="BioCyc" id="MetaCyc:MONOMER-19495"/>
<dbReference type="BRENDA" id="1.18.6.1">
    <property type="organism ID" value="49"/>
</dbReference>
<dbReference type="EvolutionaryTrace" id="P00459"/>
<dbReference type="GO" id="GO:0051539">
    <property type="term" value="F:4 iron, 4 sulfur cluster binding"/>
    <property type="evidence" value="ECO:0007669"/>
    <property type="project" value="UniProtKB-KW"/>
</dbReference>
<dbReference type="GO" id="GO:0005524">
    <property type="term" value="F:ATP binding"/>
    <property type="evidence" value="ECO:0007669"/>
    <property type="project" value="UniProtKB-UniRule"/>
</dbReference>
<dbReference type="GO" id="GO:0046872">
    <property type="term" value="F:metal ion binding"/>
    <property type="evidence" value="ECO:0007669"/>
    <property type="project" value="UniProtKB-KW"/>
</dbReference>
<dbReference type="GO" id="GO:0016163">
    <property type="term" value="F:nitrogenase activity"/>
    <property type="evidence" value="ECO:0000315"/>
    <property type="project" value="CACAO"/>
</dbReference>
<dbReference type="GO" id="GO:0009399">
    <property type="term" value="P:nitrogen fixation"/>
    <property type="evidence" value="ECO:0007669"/>
    <property type="project" value="UniProtKB-UniRule"/>
</dbReference>
<dbReference type="CDD" id="cd02040">
    <property type="entry name" value="NifH"/>
    <property type="match status" value="1"/>
</dbReference>
<dbReference type="FunFam" id="3.40.50.300:FF:001379">
    <property type="entry name" value="Nitrogenase iron protein 1"/>
    <property type="match status" value="1"/>
</dbReference>
<dbReference type="Gene3D" id="3.40.50.300">
    <property type="entry name" value="P-loop containing nucleotide triphosphate hydrolases"/>
    <property type="match status" value="1"/>
</dbReference>
<dbReference type="HAMAP" id="MF_00533">
    <property type="entry name" value="NifH"/>
    <property type="match status" value="1"/>
</dbReference>
<dbReference type="InterPro" id="IPR030655">
    <property type="entry name" value="NifH/chlL_CS"/>
</dbReference>
<dbReference type="InterPro" id="IPR000392">
    <property type="entry name" value="NifH/frxC"/>
</dbReference>
<dbReference type="InterPro" id="IPR005977">
    <property type="entry name" value="Nitrogenase_Fe_NifH"/>
</dbReference>
<dbReference type="InterPro" id="IPR027417">
    <property type="entry name" value="P-loop_NTPase"/>
</dbReference>
<dbReference type="NCBIfam" id="TIGR01287">
    <property type="entry name" value="nifH"/>
    <property type="match status" value="1"/>
</dbReference>
<dbReference type="PANTHER" id="PTHR42864">
    <property type="entry name" value="LIGHT-INDEPENDENT PROTOCHLOROPHYLLIDE REDUCTASE IRON-SULFUR ATP-BINDING PROTEIN"/>
    <property type="match status" value="1"/>
</dbReference>
<dbReference type="PANTHER" id="PTHR42864:SF2">
    <property type="entry name" value="LIGHT-INDEPENDENT PROTOCHLOROPHYLLIDE REDUCTASE IRON-SULFUR ATP-BINDING PROTEIN"/>
    <property type="match status" value="1"/>
</dbReference>
<dbReference type="Pfam" id="PF00142">
    <property type="entry name" value="Fer4_NifH"/>
    <property type="match status" value="1"/>
</dbReference>
<dbReference type="PIRSF" id="PIRSF000363">
    <property type="entry name" value="Nitrogenase_iron"/>
    <property type="match status" value="1"/>
</dbReference>
<dbReference type="PRINTS" id="PR00091">
    <property type="entry name" value="NITROGNASEII"/>
</dbReference>
<dbReference type="SUPFAM" id="SSF52540">
    <property type="entry name" value="P-loop containing nucleoside triphosphate hydrolases"/>
    <property type="match status" value="1"/>
</dbReference>
<dbReference type="PROSITE" id="PS00746">
    <property type="entry name" value="NIFH_FRXC_1"/>
    <property type="match status" value="1"/>
</dbReference>
<dbReference type="PROSITE" id="PS00692">
    <property type="entry name" value="NIFH_FRXC_2"/>
    <property type="match status" value="1"/>
</dbReference>
<dbReference type="PROSITE" id="PS51026">
    <property type="entry name" value="NIFH_FRXC_3"/>
    <property type="match status" value="1"/>
</dbReference>
<keyword id="KW-0002">3D-structure</keyword>
<keyword id="KW-0004">4Fe-4S</keyword>
<keyword id="KW-0013">ADP-ribosylation</keyword>
<keyword id="KW-0067">ATP-binding</keyword>
<keyword id="KW-0903">Direct protein sequencing</keyword>
<keyword id="KW-0408">Iron</keyword>
<keyword id="KW-0411">Iron-sulfur</keyword>
<keyword id="KW-0479">Metal-binding</keyword>
<keyword id="KW-0535">Nitrogen fixation</keyword>
<keyword id="KW-0547">Nucleotide-binding</keyword>
<keyword id="KW-0560">Oxidoreductase</keyword>
<evidence type="ECO:0000250" key="1"/>
<evidence type="ECO:0000269" key="2">
    <source>
    </source>
</evidence>
<evidence type="ECO:0000269" key="3">
    <source>
    </source>
</evidence>
<evidence type="ECO:0000269" key="4">
    <source>
    </source>
</evidence>
<evidence type="ECO:0000305" key="5"/>
<evidence type="ECO:0007829" key="6">
    <source>
        <dbReference type="PDB" id="1G20"/>
    </source>
</evidence>
<evidence type="ECO:0007829" key="7">
    <source>
        <dbReference type="PDB" id="1NIP"/>
    </source>
</evidence>
<evidence type="ECO:0007829" key="8">
    <source>
        <dbReference type="PDB" id="1RW4"/>
    </source>
</evidence>
<evidence type="ECO:0007829" key="9">
    <source>
        <dbReference type="PDB" id="1XCP"/>
    </source>
</evidence>
<evidence type="ECO:0007829" key="10">
    <source>
        <dbReference type="PDB" id="1XD8"/>
    </source>
</evidence>
<evidence type="ECO:0007829" key="11">
    <source>
        <dbReference type="PDB" id="1XDB"/>
    </source>
</evidence>
<evidence type="ECO:0007829" key="12">
    <source>
        <dbReference type="PDB" id="2AFH"/>
    </source>
</evidence>
<evidence type="ECO:0007829" key="13">
    <source>
        <dbReference type="PDB" id="4WZA"/>
    </source>
</evidence>
<evidence type="ECO:0007829" key="14">
    <source>
        <dbReference type="PDB" id="6N4J"/>
    </source>
</evidence>
<evidence type="ECO:0007829" key="15">
    <source>
        <dbReference type="PDB" id="6N4K"/>
    </source>
</evidence>
<evidence type="ECO:0007829" key="16">
    <source>
        <dbReference type="PDB" id="6N4L"/>
    </source>
</evidence>
<evidence type="ECO:0007829" key="17">
    <source>
        <dbReference type="PDB" id="8DFD"/>
    </source>
</evidence>
<organism>
    <name type="scientific">Azotobacter vinelandii</name>
    <dbReference type="NCBI Taxonomy" id="354"/>
    <lineage>
        <taxon>Bacteria</taxon>
        <taxon>Pseudomonadati</taxon>
        <taxon>Pseudomonadota</taxon>
        <taxon>Gammaproteobacteria</taxon>
        <taxon>Pseudomonadales</taxon>
        <taxon>Pseudomonadaceae</taxon>
        <taxon>Azotobacter</taxon>
    </lineage>
</organism>
<accession>P00459</accession>
<feature type="initiator methionine" description="Removed" evidence="3">
    <location>
        <position position="1"/>
    </location>
</feature>
<feature type="chain" id="PRO_0000139490" description="Nitrogenase iron protein 1">
    <location>
        <begin position="2"/>
        <end position="290"/>
    </location>
</feature>
<feature type="binding site">
    <location>
        <begin position="10"/>
        <end position="17"/>
    </location>
    <ligand>
        <name>ATP</name>
        <dbReference type="ChEBI" id="CHEBI:30616"/>
    </ligand>
</feature>
<feature type="binding site">
    <location>
        <position position="98"/>
    </location>
    <ligand>
        <name>[4Fe-4S] cluster</name>
        <dbReference type="ChEBI" id="CHEBI:49883"/>
        <note>ligand shared between dimeric partners</note>
    </ligand>
</feature>
<feature type="binding site">
    <location>
        <position position="133"/>
    </location>
    <ligand>
        <name>[4Fe-4S] cluster</name>
        <dbReference type="ChEBI" id="CHEBI:49883"/>
        <note>ligand shared between dimeric partners</note>
    </ligand>
</feature>
<feature type="modified residue" description="ADP-ribosylarginine; by dinitrogenase reductase ADP-ribosyltransferase" evidence="1">
    <location>
        <position position="101"/>
    </location>
</feature>
<feature type="mutagenesis site" description="Loss of nitrogen fixation." evidence="2">
    <original>K</original>
    <variation>Q</variation>
    <variation>P</variation>
    <location>
        <position position="16"/>
    </location>
</feature>
<feature type="sequence conflict" description="In Ref. 2; AAA22142." evidence="5" ref="2">
    <original>A</original>
    <variation>P</variation>
    <location>
        <position position="145"/>
    </location>
</feature>
<feature type="strand" evidence="16">
    <location>
        <begin position="4"/>
        <end position="9"/>
    </location>
</feature>
<feature type="helix" evidence="6">
    <location>
        <begin position="12"/>
        <end position="14"/>
    </location>
</feature>
<feature type="helix" evidence="16">
    <location>
        <begin position="16"/>
        <end position="29"/>
    </location>
</feature>
<feature type="strand" evidence="16">
    <location>
        <begin position="34"/>
        <end position="40"/>
    </location>
</feature>
<feature type="strand" evidence="12">
    <location>
        <begin position="41"/>
        <end position="43"/>
    </location>
</feature>
<feature type="turn" evidence="9">
    <location>
        <begin position="44"/>
        <end position="46"/>
    </location>
</feature>
<feature type="helix" evidence="16">
    <location>
        <begin position="47"/>
        <end position="50"/>
    </location>
</feature>
<feature type="strand" evidence="13">
    <location>
        <begin position="51"/>
        <end position="53"/>
    </location>
</feature>
<feature type="helix" evidence="16">
    <location>
        <begin position="58"/>
        <end position="65"/>
    </location>
</feature>
<feature type="helix" evidence="16">
    <location>
        <begin position="68"/>
        <end position="70"/>
    </location>
</feature>
<feature type="helix" evidence="16">
    <location>
        <begin position="73"/>
        <end position="76"/>
    </location>
</feature>
<feature type="strand" evidence="10">
    <location>
        <begin position="77"/>
        <end position="80"/>
    </location>
</feature>
<feature type="helix" evidence="16">
    <location>
        <begin position="81"/>
        <end position="83"/>
    </location>
</feature>
<feature type="strand" evidence="16">
    <location>
        <begin position="85"/>
        <end position="88"/>
    </location>
</feature>
<feature type="turn" evidence="15">
    <location>
        <begin position="94"/>
        <end position="96"/>
    </location>
</feature>
<feature type="helix" evidence="16">
    <location>
        <begin position="101"/>
        <end position="112"/>
    </location>
</feature>
<feature type="turn" evidence="15">
    <location>
        <begin position="113"/>
        <end position="117"/>
    </location>
</feature>
<feature type="strand" evidence="16">
    <location>
        <begin position="122"/>
        <end position="127"/>
    </location>
</feature>
<feature type="helix" evidence="7">
    <location>
        <begin position="129"/>
        <end position="131"/>
    </location>
</feature>
<feature type="helix" evidence="16">
    <location>
        <begin position="134"/>
        <end position="141"/>
    </location>
</feature>
<feature type="turn" evidence="17">
    <location>
        <begin position="142"/>
        <end position="144"/>
    </location>
</feature>
<feature type="strand" evidence="16">
    <location>
        <begin position="146"/>
        <end position="152"/>
    </location>
</feature>
<feature type="helix" evidence="16">
    <location>
        <begin position="156"/>
        <end position="171"/>
    </location>
</feature>
<feature type="turn" evidence="16">
    <location>
        <begin position="172"/>
        <end position="174"/>
    </location>
</feature>
<feature type="strand" evidence="16">
    <location>
        <begin position="179"/>
        <end position="186"/>
    </location>
</feature>
<feature type="strand" evidence="8">
    <location>
        <begin position="188"/>
        <end position="190"/>
    </location>
</feature>
<feature type="helix" evidence="16">
    <location>
        <begin position="193"/>
        <end position="204"/>
    </location>
</feature>
<feature type="strand" evidence="16">
    <location>
        <begin position="208"/>
        <end position="212"/>
    </location>
</feature>
<feature type="helix" evidence="16">
    <location>
        <begin position="217"/>
        <end position="223"/>
    </location>
</feature>
<feature type="helix" evidence="16">
    <location>
        <begin position="228"/>
        <end position="231"/>
    </location>
</feature>
<feature type="strand" evidence="11">
    <location>
        <begin position="233"/>
        <end position="235"/>
    </location>
</feature>
<feature type="helix" evidence="16">
    <location>
        <begin position="236"/>
        <end position="250"/>
    </location>
</feature>
<feature type="helix" evidence="16">
    <location>
        <begin position="262"/>
        <end position="271"/>
    </location>
</feature>
<feature type="turn" evidence="16">
    <location>
        <begin position="272"/>
        <end position="276"/>
    </location>
</feature>
<feature type="helix" evidence="12">
    <location>
        <begin position="280"/>
        <end position="282"/>
    </location>
</feature>
<feature type="helix" evidence="14">
    <location>
        <begin position="287"/>
        <end position="289"/>
    </location>
</feature>
<gene>
    <name type="primary">nifH1</name>
</gene>